<reference key="1">
    <citation type="journal article" date="1989" name="J. Mol. Biol.">
        <title>Parvalbumin genes from human and rat are identical in intron/exon organization and contain highly homologous regulatory elements and coding sequences.</title>
        <authorList>
            <person name="Berchtold M.W."/>
        </authorList>
    </citation>
    <scope>NUCLEOTIDE SEQUENCE [GENOMIC DNA]</scope>
</reference>
<reference key="2">
    <citation type="journal article" date="1993" name="Eur. J. Biochem.">
        <title>Human alpha and beta parvalbumins. Structure and tissue-specific expression.</title>
        <authorList>
            <person name="Foehr U.G."/>
            <person name="Weber B.R."/>
            <person name="Muentener M."/>
            <person name="Staudenmann W."/>
            <person name="Hughes G.J."/>
            <person name="Frutiger S."/>
            <person name="Banville D."/>
            <person name="Schaefer B.W."/>
            <person name="Heizmann C.W."/>
        </authorList>
    </citation>
    <scope>NUCLEOTIDE SEQUENCE [MRNA]</scope>
    <scope>PROTEIN SEQUENCE OF 2-110</scope>
    <source>
        <tissue>Cerebellum</tissue>
    </source>
</reference>
<reference key="3">
    <citation type="journal article" date="2004" name="Genome Biol.">
        <title>A genome annotation-driven approach to cloning the human ORFeome.</title>
        <authorList>
            <person name="Collins J.E."/>
            <person name="Wright C.L."/>
            <person name="Edwards C.A."/>
            <person name="Davis M.P."/>
            <person name="Grinham J.A."/>
            <person name="Cole C.G."/>
            <person name="Goward M.E."/>
            <person name="Aguado B."/>
            <person name="Mallya M."/>
            <person name="Mokrab Y."/>
            <person name="Huckle E.J."/>
            <person name="Beare D.M."/>
            <person name="Dunham I."/>
        </authorList>
    </citation>
    <scope>NUCLEOTIDE SEQUENCE [LARGE SCALE MRNA]</scope>
</reference>
<reference key="4">
    <citation type="journal article" date="2004" name="Nat. Genet.">
        <title>Complete sequencing and characterization of 21,243 full-length human cDNAs.</title>
        <authorList>
            <person name="Ota T."/>
            <person name="Suzuki Y."/>
            <person name="Nishikawa T."/>
            <person name="Otsuki T."/>
            <person name="Sugiyama T."/>
            <person name="Irie R."/>
            <person name="Wakamatsu A."/>
            <person name="Hayashi K."/>
            <person name="Sato H."/>
            <person name="Nagai K."/>
            <person name="Kimura K."/>
            <person name="Makita H."/>
            <person name="Sekine M."/>
            <person name="Obayashi M."/>
            <person name="Nishi T."/>
            <person name="Shibahara T."/>
            <person name="Tanaka T."/>
            <person name="Ishii S."/>
            <person name="Yamamoto J."/>
            <person name="Saito K."/>
            <person name="Kawai Y."/>
            <person name="Isono Y."/>
            <person name="Nakamura Y."/>
            <person name="Nagahari K."/>
            <person name="Murakami K."/>
            <person name="Yasuda T."/>
            <person name="Iwayanagi T."/>
            <person name="Wagatsuma M."/>
            <person name="Shiratori A."/>
            <person name="Sudo H."/>
            <person name="Hosoiri T."/>
            <person name="Kaku Y."/>
            <person name="Kodaira H."/>
            <person name="Kondo H."/>
            <person name="Sugawara M."/>
            <person name="Takahashi M."/>
            <person name="Kanda K."/>
            <person name="Yokoi T."/>
            <person name="Furuya T."/>
            <person name="Kikkawa E."/>
            <person name="Omura Y."/>
            <person name="Abe K."/>
            <person name="Kamihara K."/>
            <person name="Katsuta N."/>
            <person name="Sato K."/>
            <person name="Tanikawa M."/>
            <person name="Yamazaki M."/>
            <person name="Ninomiya K."/>
            <person name="Ishibashi T."/>
            <person name="Yamashita H."/>
            <person name="Murakawa K."/>
            <person name="Fujimori K."/>
            <person name="Tanai H."/>
            <person name="Kimata M."/>
            <person name="Watanabe M."/>
            <person name="Hiraoka S."/>
            <person name="Chiba Y."/>
            <person name="Ishida S."/>
            <person name="Ono Y."/>
            <person name="Takiguchi S."/>
            <person name="Watanabe S."/>
            <person name="Yosida M."/>
            <person name="Hotuta T."/>
            <person name="Kusano J."/>
            <person name="Kanehori K."/>
            <person name="Takahashi-Fujii A."/>
            <person name="Hara H."/>
            <person name="Tanase T.-O."/>
            <person name="Nomura Y."/>
            <person name="Togiya S."/>
            <person name="Komai F."/>
            <person name="Hara R."/>
            <person name="Takeuchi K."/>
            <person name="Arita M."/>
            <person name="Imose N."/>
            <person name="Musashino K."/>
            <person name="Yuuki H."/>
            <person name="Oshima A."/>
            <person name="Sasaki N."/>
            <person name="Aotsuka S."/>
            <person name="Yoshikawa Y."/>
            <person name="Matsunawa H."/>
            <person name="Ichihara T."/>
            <person name="Shiohata N."/>
            <person name="Sano S."/>
            <person name="Moriya S."/>
            <person name="Momiyama H."/>
            <person name="Satoh N."/>
            <person name="Takami S."/>
            <person name="Terashima Y."/>
            <person name="Suzuki O."/>
            <person name="Nakagawa S."/>
            <person name="Senoh A."/>
            <person name="Mizoguchi H."/>
            <person name="Goto Y."/>
            <person name="Shimizu F."/>
            <person name="Wakebe H."/>
            <person name="Hishigaki H."/>
            <person name="Watanabe T."/>
            <person name="Sugiyama A."/>
            <person name="Takemoto M."/>
            <person name="Kawakami B."/>
            <person name="Yamazaki M."/>
            <person name="Watanabe K."/>
            <person name="Kumagai A."/>
            <person name="Itakura S."/>
            <person name="Fukuzumi Y."/>
            <person name="Fujimori Y."/>
            <person name="Komiyama M."/>
            <person name="Tashiro H."/>
            <person name="Tanigami A."/>
            <person name="Fujiwara T."/>
            <person name="Ono T."/>
            <person name="Yamada K."/>
            <person name="Fujii Y."/>
            <person name="Ozaki K."/>
            <person name="Hirao M."/>
            <person name="Ohmori Y."/>
            <person name="Kawabata A."/>
            <person name="Hikiji T."/>
            <person name="Kobatake N."/>
            <person name="Inagaki H."/>
            <person name="Ikema Y."/>
            <person name="Okamoto S."/>
            <person name="Okitani R."/>
            <person name="Kawakami T."/>
            <person name="Noguchi S."/>
            <person name="Itoh T."/>
            <person name="Shigeta K."/>
            <person name="Senba T."/>
            <person name="Matsumura K."/>
            <person name="Nakajima Y."/>
            <person name="Mizuno T."/>
            <person name="Morinaga M."/>
            <person name="Sasaki M."/>
            <person name="Togashi T."/>
            <person name="Oyama M."/>
            <person name="Hata H."/>
            <person name="Watanabe M."/>
            <person name="Komatsu T."/>
            <person name="Mizushima-Sugano J."/>
            <person name="Satoh T."/>
            <person name="Shirai Y."/>
            <person name="Takahashi Y."/>
            <person name="Nakagawa K."/>
            <person name="Okumura K."/>
            <person name="Nagase T."/>
            <person name="Nomura N."/>
            <person name="Kikuchi H."/>
            <person name="Masuho Y."/>
            <person name="Yamashita R."/>
            <person name="Nakai K."/>
            <person name="Yada T."/>
            <person name="Nakamura Y."/>
            <person name="Ohara O."/>
            <person name="Isogai T."/>
            <person name="Sugano S."/>
        </authorList>
    </citation>
    <scope>NUCLEOTIDE SEQUENCE [LARGE SCALE MRNA]</scope>
    <source>
        <tissue>Cerebellum</tissue>
    </source>
</reference>
<reference key="5">
    <citation type="journal article" date="1999" name="Nature">
        <title>The DNA sequence of human chromosome 22.</title>
        <authorList>
            <person name="Dunham I."/>
            <person name="Hunt A.R."/>
            <person name="Collins J.E."/>
            <person name="Bruskiewich R."/>
            <person name="Beare D.M."/>
            <person name="Clamp M."/>
            <person name="Smink L.J."/>
            <person name="Ainscough R."/>
            <person name="Almeida J.P."/>
            <person name="Babbage A.K."/>
            <person name="Bagguley C."/>
            <person name="Bailey J."/>
            <person name="Barlow K.F."/>
            <person name="Bates K.N."/>
            <person name="Beasley O.P."/>
            <person name="Bird C.P."/>
            <person name="Blakey S.E."/>
            <person name="Bridgeman A.M."/>
            <person name="Buck D."/>
            <person name="Burgess J."/>
            <person name="Burrill W.D."/>
            <person name="Burton J."/>
            <person name="Carder C."/>
            <person name="Carter N.P."/>
            <person name="Chen Y."/>
            <person name="Clark G."/>
            <person name="Clegg S.M."/>
            <person name="Cobley V.E."/>
            <person name="Cole C.G."/>
            <person name="Collier R.E."/>
            <person name="Connor R."/>
            <person name="Conroy D."/>
            <person name="Corby N.R."/>
            <person name="Coville G.J."/>
            <person name="Cox A.V."/>
            <person name="Davis J."/>
            <person name="Dawson E."/>
            <person name="Dhami P.D."/>
            <person name="Dockree C."/>
            <person name="Dodsworth S.J."/>
            <person name="Durbin R.M."/>
            <person name="Ellington A.G."/>
            <person name="Evans K.L."/>
            <person name="Fey J.M."/>
            <person name="Fleming K."/>
            <person name="French L."/>
            <person name="Garner A.A."/>
            <person name="Gilbert J.G.R."/>
            <person name="Goward M.E."/>
            <person name="Grafham D.V."/>
            <person name="Griffiths M.N.D."/>
            <person name="Hall C."/>
            <person name="Hall R.E."/>
            <person name="Hall-Tamlyn G."/>
            <person name="Heathcott R.W."/>
            <person name="Ho S."/>
            <person name="Holmes S."/>
            <person name="Hunt S.E."/>
            <person name="Jones M.C."/>
            <person name="Kershaw J."/>
            <person name="Kimberley A.M."/>
            <person name="King A."/>
            <person name="Laird G.K."/>
            <person name="Langford C.F."/>
            <person name="Leversha M.A."/>
            <person name="Lloyd C."/>
            <person name="Lloyd D.M."/>
            <person name="Martyn I.D."/>
            <person name="Mashreghi-Mohammadi M."/>
            <person name="Matthews L.H."/>
            <person name="Mccann O.T."/>
            <person name="Mcclay J."/>
            <person name="Mclaren S."/>
            <person name="McMurray A.A."/>
            <person name="Milne S.A."/>
            <person name="Mortimore B.J."/>
            <person name="Odell C.N."/>
            <person name="Pavitt R."/>
            <person name="Pearce A.V."/>
            <person name="Pearson D."/>
            <person name="Phillimore B.J.C.T."/>
            <person name="Phillips S.H."/>
            <person name="Plumb R.W."/>
            <person name="Ramsay H."/>
            <person name="Ramsey Y."/>
            <person name="Rogers L."/>
            <person name="Ross M.T."/>
            <person name="Scott C.E."/>
            <person name="Sehra H.K."/>
            <person name="Skuce C.D."/>
            <person name="Smalley S."/>
            <person name="Smith M.L."/>
            <person name="Soderlund C."/>
            <person name="Spragon L."/>
            <person name="Steward C.A."/>
            <person name="Sulston J.E."/>
            <person name="Swann R.M."/>
            <person name="Vaudin M."/>
            <person name="Wall M."/>
            <person name="Wallis J.M."/>
            <person name="Whiteley M.N."/>
            <person name="Willey D.L."/>
            <person name="Williams L."/>
            <person name="Williams S.A."/>
            <person name="Williamson H."/>
            <person name="Wilmer T.E."/>
            <person name="Wilming L."/>
            <person name="Wright C.L."/>
            <person name="Hubbard T."/>
            <person name="Bentley D.R."/>
            <person name="Beck S."/>
            <person name="Rogers J."/>
            <person name="Shimizu N."/>
            <person name="Minoshima S."/>
            <person name="Kawasaki K."/>
            <person name="Sasaki T."/>
            <person name="Asakawa S."/>
            <person name="Kudoh J."/>
            <person name="Shintani A."/>
            <person name="Shibuya K."/>
            <person name="Yoshizaki Y."/>
            <person name="Aoki N."/>
            <person name="Mitsuyama S."/>
            <person name="Roe B.A."/>
            <person name="Chen F."/>
            <person name="Chu L."/>
            <person name="Crabtree J."/>
            <person name="Deschamps S."/>
            <person name="Do A."/>
            <person name="Do T."/>
            <person name="Dorman A."/>
            <person name="Fang F."/>
            <person name="Fu Y."/>
            <person name="Hu P."/>
            <person name="Hua A."/>
            <person name="Kenton S."/>
            <person name="Lai H."/>
            <person name="Lao H.I."/>
            <person name="Lewis J."/>
            <person name="Lewis S."/>
            <person name="Lin S.-P."/>
            <person name="Loh P."/>
            <person name="Malaj E."/>
            <person name="Nguyen T."/>
            <person name="Pan H."/>
            <person name="Phan S."/>
            <person name="Qi S."/>
            <person name="Qian Y."/>
            <person name="Ray L."/>
            <person name="Ren Q."/>
            <person name="Shaull S."/>
            <person name="Sloan D."/>
            <person name="Song L."/>
            <person name="Wang Q."/>
            <person name="Wang Y."/>
            <person name="Wang Z."/>
            <person name="White J."/>
            <person name="Willingham D."/>
            <person name="Wu H."/>
            <person name="Yao Z."/>
            <person name="Zhan M."/>
            <person name="Zhang G."/>
            <person name="Chissoe S."/>
            <person name="Murray J."/>
            <person name="Miller N."/>
            <person name="Minx P."/>
            <person name="Fulton R."/>
            <person name="Johnson D."/>
            <person name="Bemis G."/>
            <person name="Bentley D."/>
            <person name="Bradshaw H."/>
            <person name="Bourne S."/>
            <person name="Cordes M."/>
            <person name="Du Z."/>
            <person name="Fulton L."/>
            <person name="Goela D."/>
            <person name="Graves T."/>
            <person name="Hawkins J."/>
            <person name="Hinds K."/>
            <person name="Kemp K."/>
            <person name="Latreille P."/>
            <person name="Layman D."/>
            <person name="Ozersky P."/>
            <person name="Rohlfing T."/>
            <person name="Scheet P."/>
            <person name="Walker C."/>
            <person name="Wamsley A."/>
            <person name="Wohldmann P."/>
            <person name="Pepin K."/>
            <person name="Nelson J."/>
            <person name="Korf I."/>
            <person name="Bedell J.A."/>
            <person name="Hillier L.W."/>
            <person name="Mardis E."/>
            <person name="Waterston R."/>
            <person name="Wilson R."/>
            <person name="Emanuel B.S."/>
            <person name="Shaikh T."/>
            <person name="Kurahashi H."/>
            <person name="Saitta S."/>
            <person name="Budarf M.L."/>
            <person name="McDermid H.E."/>
            <person name="Johnson A."/>
            <person name="Wong A.C.C."/>
            <person name="Morrow B.E."/>
            <person name="Edelmann L."/>
            <person name="Kim U.J."/>
            <person name="Shizuya H."/>
            <person name="Simon M.I."/>
            <person name="Dumanski J.P."/>
            <person name="Peyrard M."/>
            <person name="Kedra D."/>
            <person name="Seroussi E."/>
            <person name="Fransson I."/>
            <person name="Tapia I."/>
            <person name="Bruder C.E."/>
            <person name="O'Brien K.P."/>
            <person name="Wilkinson P."/>
            <person name="Bodenteich A."/>
            <person name="Hartman K."/>
            <person name="Hu X."/>
            <person name="Khan A.S."/>
            <person name="Lane L."/>
            <person name="Tilahun Y."/>
            <person name="Wright H."/>
        </authorList>
    </citation>
    <scope>NUCLEOTIDE SEQUENCE [LARGE SCALE GENOMIC DNA]</scope>
</reference>
<reference key="6">
    <citation type="submission" date="2005-07" db="EMBL/GenBank/DDBJ databases">
        <authorList>
            <person name="Mural R.J."/>
            <person name="Istrail S."/>
            <person name="Sutton G.G."/>
            <person name="Florea L."/>
            <person name="Halpern A.L."/>
            <person name="Mobarry C.M."/>
            <person name="Lippert R."/>
            <person name="Walenz B."/>
            <person name="Shatkay H."/>
            <person name="Dew I."/>
            <person name="Miller J.R."/>
            <person name="Flanigan M.J."/>
            <person name="Edwards N.J."/>
            <person name="Bolanos R."/>
            <person name="Fasulo D."/>
            <person name="Halldorsson B.V."/>
            <person name="Hannenhalli S."/>
            <person name="Turner R."/>
            <person name="Yooseph S."/>
            <person name="Lu F."/>
            <person name="Nusskern D.R."/>
            <person name="Shue B.C."/>
            <person name="Zheng X.H."/>
            <person name="Zhong F."/>
            <person name="Delcher A.L."/>
            <person name="Huson D.H."/>
            <person name="Kravitz S.A."/>
            <person name="Mouchard L."/>
            <person name="Reinert K."/>
            <person name="Remington K.A."/>
            <person name="Clark A.G."/>
            <person name="Waterman M.S."/>
            <person name="Eichler E.E."/>
            <person name="Adams M.D."/>
            <person name="Hunkapiller M.W."/>
            <person name="Myers E.W."/>
            <person name="Venter J.C."/>
        </authorList>
    </citation>
    <scope>NUCLEOTIDE SEQUENCE [LARGE SCALE GENOMIC DNA]</scope>
</reference>
<reference key="7">
    <citation type="journal article" date="2004" name="Genome Res.">
        <title>The status, quality, and expansion of the NIH full-length cDNA project: the Mammalian Gene Collection (MGC).</title>
        <authorList>
            <consortium name="The MGC Project Team"/>
        </authorList>
    </citation>
    <scope>NUCLEOTIDE SEQUENCE [LARGE SCALE MRNA]</scope>
</reference>
<reference key="8">
    <citation type="journal article" date="1999" name="Anal. Biochem.">
        <title>Electrospray ionization mass spectrometry: analysis of the Ca2+-binding properties of human recombinant alpha-parvalbumin and nine mutant proteins.</title>
        <authorList>
            <person name="Troxler H."/>
            <person name="Kuster T."/>
            <person name="Rhyner J.A."/>
            <person name="Gehrig P."/>
            <person name="Heizmann C.W."/>
        </authorList>
    </citation>
    <scope>MUTAGENESIS</scope>
    <scope>ACETYLATION AT SER-2</scope>
    <scope>MASS SPECTROMETRY</scope>
</reference>
<reference evidence="11 12" key="9">
    <citation type="journal article" date="2004" name="Biochemistry">
        <title>Paramagnetism-based refinement strategy for the solution structure of human alpha-parvalbumin.</title>
        <authorList>
            <person name="Baig I."/>
            <person name="Bertini I."/>
            <person name="Del Bianco C."/>
            <person name="Gupta Y.K."/>
            <person name="Lee Y.M."/>
            <person name="Luchinat C."/>
            <person name="Quattrone A."/>
        </authorList>
    </citation>
    <scope>STRUCTURE BY NMR IN COMPLEXES WITH CA(2+)</scope>
    <scope>FUNCTION</scope>
</reference>
<reference evidence="13" key="10">
    <citation type="journal article" date="2024" name="Protein Sci.">
        <title>Comparative studies of seafood and reptile alpha- and beta-parvalbumins.</title>
        <authorList>
            <person name="O'Malley A."/>
            <person name="Ray J.M."/>
            <person name="Kitlas P."/>
            <person name="Ruethers T."/>
            <person name="Kapingidza A.B."/>
            <person name="Cierpicki T."/>
            <person name="Lopata A."/>
            <person name="Kowal K."/>
            <person name="Chruszcz M."/>
        </authorList>
    </citation>
    <scope>X-RAY CRYSTALLOGRAPHY (2.7 ANGSTROMS) OF 2-110 IN COMPLEX WITH CA(2+)</scope>
    <scope>BIOPHYSICOCHEMICAL PROPERTIES</scope>
</reference>
<gene>
    <name type="primary">PVALB</name>
</gene>
<accession>P20472</accession>
<accession>B2R4H7</accession>
<accession>P78378</accession>
<accession>Q4VB78</accession>
<accession>Q5R3Q9</accession>
<name>PRVA_HUMAN</name>
<protein>
    <recommendedName>
        <fullName>Parvalbumin alpha</fullName>
    </recommendedName>
    <alternativeName>
        <fullName evidence="8 9">Alpha-parvalbumin</fullName>
        <shortName evidence="8 9">Alpha-PV</shortName>
    </alternativeName>
</protein>
<keyword id="KW-0002">3D-structure</keyword>
<keyword id="KW-0007">Acetylation</keyword>
<keyword id="KW-0106">Calcium</keyword>
<keyword id="KW-0903">Direct protein sequencing</keyword>
<keyword id="KW-0479">Metal-binding</keyword>
<keyword id="KW-0514">Muscle protein</keyword>
<keyword id="KW-0597">Phosphoprotein</keyword>
<keyword id="KW-1267">Proteomics identification</keyword>
<keyword id="KW-1185">Reference proteome</keyword>
<keyword id="KW-0677">Repeat</keyword>
<comment type="function">
    <text evidence="1 5 6">In muscle, parvalbumin is thought to be involved in relaxation after contraction (By similarity). It binds two calcium ions (PubMed:15122922, PubMed:39584689).</text>
</comment>
<comment type="biophysicochemical properties">
    <temperatureDependence>
        <text evidence="6">Thermostable between pH 4.0-9.5. Average melting temperature (Tm) across all pH values is 72 degrees Celsius. Lower melting temperature in acidic pH 4.0-5.0.</text>
    </temperatureDependence>
</comment>
<comment type="domain">
    <text evidence="2">AB domain, comprising of helices A and B, is involved in structural stabilization, protecting the hydrophobic core of the protein. It is required for high-affinity binding of Ca(2+) and for Mg(2+)-binding.</text>
</comment>
<comment type="mass spectrometry"/>
<comment type="similarity">
    <text evidence="10">Belongs to the parvalbumin family.</text>
</comment>
<dbReference type="EMBL" id="X63578">
    <property type="protein sequence ID" value="CAA45134.1"/>
    <property type="molecule type" value="Genomic_DNA"/>
</dbReference>
<dbReference type="EMBL" id="X52695">
    <property type="protein sequence ID" value="CAA36924.1"/>
    <property type="molecule type" value="Genomic_DNA"/>
</dbReference>
<dbReference type="EMBL" id="X52696">
    <property type="protein sequence ID" value="CAA36924.1"/>
    <property type="status" value="JOINED"/>
    <property type="molecule type" value="Genomic_DNA"/>
</dbReference>
<dbReference type="EMBL" id="X52697">
    <property type="protein sequence ID" value="CAA36924.1"/>
    <property type="status" value="JOINED"/>
    <property type="molecule type" value="Genomic_DNA"/>
</dbReference>
<dbReference type="EMBL" id="X52698">
    <property type="protein sequence ID" value="CAA36924.1"/>
    <property type="status" value="JOINED"/>
    <property type="molecule type" value="Genomic_DNA"/>
</dbReference>
<dbReference type="EMBL" id="X63070">
    <property type="protein sequence ID" value="CAA44792.1"/>
    <property type="molecule type" value="mRNA"/>
</dbReference>
<dbReference type="EMBL" id="CR456552">
    <property type="protein sequence ID" value="CAG30438.1"/>
    <property type="molecule type" value="mRNA"/>
</dbReference>
<dbReference type="EMBL" id="AK311832">
    <property type="protein sequence ID" value="BAG34774.1"/>
    <property type="molecule type" value="mRNA"/>
</dbReference>
<dbReference type="EMBL" id="Z82184">
    <property type="status" value="NOT_ANNOTATED_CDS"/>
    <property type="molecule type" value="Genomic_DNA"/>
</dbReference>
<dbReference type="EMBL" id="Z82185">
    <property type="status" value="NOT_ANNOTATED_CDS"/>
    <property type="molecule type" value="Genomic_DNA"/>
</dbReference>
<dbReference type="EMBL" id="CH471095">
    <property type="protein sequence ID" value="EAW60118.1"/>
    <property type="molecule type" value="Genomic_DNA"/>
</dbReference>
<dbReference type="EMBL" id="BC069300">
    <property type="protein sequence ID" value="AAH69300.1"/>
    <property type="molecule type" value="mRNA"/>
</dbReference>
<dbReference type="EMBL" id="BC096112">
    <property type="protein sequence ID" value="AAH96112.1"/>
    <property type="molecule type" value="mRNA"/>
</dbReference>
<dbReference type="EMBL" id="BC096113">
    <property type="protein sequence ID" value="AAH96113.1"/>
    <property type="molecule type" value="mRNA"/>
</dbReference>
<dbReference type="EMBL" id="BC096114">
    <property type="protein sequence ID" value="AAH96114.1"/>
    <property type="molecule type" value="mRNA"/>
</dbReference>
<dbReference type="EMBL" id="BC096115">
    <property type="protein sequence ID" value="AAH96115.1"/>
    <property type="molecule type" value="mRNA"/>
</dbReference>
<dbReference type="CCDS" id="CCDS13933.1"/>
<dbReference type="PIR" id="S07531">
    <property type="entry name" value="S07531"/>
</dbReference>
<dbReference type="RefSeq" id="NP_001302461.1">
    <property type="nucleotide sequence ID" value="NM_001315532.2"/>
</dbReference>
<dbReference type="RefSeq" id="NP_002845.1">
    <property type="nucleotide sequence ID" value="NM_002854.3"/>
</dbReference>
<dbReference type="PDB" id="1RJV">
    <property type="method" value="NMR"/>
    <property type="chains" value="A=1-110"/>
</dbReference>
<dbReference type="PDB" id="1RK9">
    <property type="method" value="NMR"/>
    <property type="chains" value="A=2-110"/>
</dbReference>
<dbReference type="PDB" id="9BB8">
    <property type="method" value="X-ray"/>
    <property type="resolution" value="2.72 A"/>
    <property type="chains" value="A=2-110"/>
</dbReference>
<dbReference type="PDBsum" id="1RJV"/>
<dbReference type="PDBsum" id="1RK9"/>
<dbReference type="PDBsum" id="9BB8"/>
<dbReference type="BMRB" id="P20472"/>
<dbReference type="SMR" id="P20472"/>
<dbReference type="BioGRID" id="111774">
    <property type="interactions" value="5"/>
</dbReference>
<dbReference type="FunCoup" id="P20472">
    <property type="interactions" value="616"/>
</dbReference>
<dbReference type="IntAct" id="P20472">
    <property type="interactions" value="2"/>
</dbReference>
<dbReference type="STRING" id="9606.ENSP00000216200"/>
<dbReference type="DrugBank" id="DB01942">
    <property type="generic name" value="Formic acid"/>
</dbReference>
<dbReference type="iPTMnet" id="P20472"/>
<dbReference type="PhosphoSitePlus" id="P20472"/>
<dbReference type="BioMuta" id="PVALB"/>
<dbReference type="DMDM" id="131100"/>
<dbReference type="jPOST" id="P20472"/>
<dbReference type="MassIVE" id="P20472"/>
<dbReference type="PaxDb" id="9606-ENSP00000216200"/>
<dbReference type="PeptideAtlas" id="P20472"/>
<dbReference type="ProteomicsDB" id="53761"/>
<dbReference type="Pumba" id="P20472"/>
<dbReference type="Antibodypedia" id="3746">
    <property type="antibodies" value="388 antibodies from 42 providers"/>
</dbReference>
<dbReference type="DNASU" id="5816"/>
<dbReference type="Ensembl" id="ENST00000216200.9">
    <property type="protein sequence ID" value="ENSP00000216200.5"/>
    <property type="gene ID" value="ENSG00000100362.13"/>
</dbReference>
<dbReference type="Ensembl" id="ENST00000417718.7">
    <property type="protein sequence ID" value="ENSP00000400247.2"/>
    <property type="gene ID" value="ENSG00000100362.13"/>
</dbReference>
<dbReference type="Ensembl" id="ENST00000620986.3">
    <property type="protein sequence ID" value="ENSP00000480913.1"/>
    <property type="gene ID" value="ENSG00000274665.3"/>
</dbReference>
<dbReference type="Ensembl" id="ENST00000625893.2">
    <property type="protein sequence ID" value="ENSP00000486144.1"/>
    <property type="gene ID" value="ENSG00000274665.3"/>
</dbReference>
<dbReference type="GeneID" id="5816"/>
<dbReference type="KEGG" id="hsa:5816"/>
<dbReference type="MANE-Select" id="ENST00000417718.7">
    <property type="protein sequence ID" value="ENSP00000400247.2"/>
    <property type="RefSeq nucleotide sequence ID" value="NM_001315532.2"/>
    <property type="RefSeq protein sequence ID" value="NP_001302461.1"/>
</dbReference>
<dbReference type="UCSC" id="uc003apx.4">
    <property type="organism name" value="human"/>
</dbReference>
<dbReference type="AGR" id="HGNC:9704"/>
<dbReference type="CTD" id="5816"/>
<dbReference type="DisGeNET" id="5816"/>
<dbReference type="GeneCards" id="PVALB"/>
<dbReference type="HGNC" id="HGNC:9704">
    <property type="gene designation" value="PVALB"/>
</dbReference>
<dbReference type="HPA" id="ENSG00000100362">
    <property type="expression patterns" value="Tissue enhanced (brain, parathyroid gland, retina)"/>
</dbReference>
<dbReference type="MIM" id="168890">
    <property type="type" value="gene"/>
</dbReference>
<dbReference type="neXtProt" id="NX_P20472"/>
<dbReference type="OpenTargets" id="ENSG00000100362"/>
<dbReference type="PharmGKB" id="PA34049"/>
<dbReference type="VEuPathDB" id="HostDB:ENSG00000100362"/>
<dbReference type="eggNOG" id="KOG0027">
    <property type="taxonomic scope" value="Eukaryota"/>
</dbReference>
<dbReference type="GeneTree" id="ENSGT00940000159653"/>
<dbReference type="InParanoid" id="P20472"/>
<dbReference type="OMA" id="HRKFFQM"/>
<dbReference type="OrthoDB" id="26525at2759"/>
<dbReference type="PAN-GO" id="P20472">
    <property type="GO annotations" value="3 GO annotations based on evolutionary models"/>
</dbReference>
<dbReference type="PhylomeDB" id="P20472"/>
<dbReference type="TreeFam" id="TF332342"/>
<dbReference type="PathwayCommons" id="P20472"/>
<dbReference type="Reactome" id="R-HSA-8986944">
    <property type="pathway name" value="Transcriptional Regulation by MECP2"/>
</dbReference>
<dbReference type="SignaLink" id="P20472"/>
<dbReference type="BioGRID-ORCS" id="5816">
    <property type="hits" value="12 hits in 1146 CRISPR screens"/>
</dbReference>
<dbReference type="ChiTaRS" id="PVALB">
    <property type="organism name" value="human"/>
</dbReference>
<dbReference type="EvolutionaryTrace" id="P20472"/>
<dbReference type="GenomeRNAi" id="5816"/>
<dbReference type="Pharos" id="P20472">
    <property type="development level" value="Tbio"/>
</dbReference>
<dbReference type="PRO" id="PR:P20472"/>
<dbReference type="Proteomes" id="UP000005640">
    <property type="component" value="Chromosome 22"/>
</dbReference>
<dbReference type="RNAct" id="P20472">
    <property type="molecule type" value="protein"/>
</dbReference>
<dbReference type="Bgee" id="ENSG00000100362">
    <property type="expression patterns" value="Expressed in right hemisphere of cerebellum and 94 other cell types or tissues"/>
</dbReference>
<dbReference type="ExpressionAtlas" id="P20472">
    <property type="expression patterns" value="baseline and differential"/>
</dbReference>
<dbReference type="GO" id="GO:0030424">
    <property type="term" value="C:axon"/>
    <property type="evidence" value="ECO:0007669"/>
    <property type="project" value="Ensembl"/>
</dbReference>
<dbReference type="GO" id="GO:0005737">
    <property type="term" value="C:cytoplasm"/>
    <property type="evidence" value="ECO:0000318"/>
    <property type="project" value="GO_Central"/>
</dbReference>
<dbReference type="GO" id="GO:0045202">
    <property type="term" value="C:synapse"/>
    <property type="evidence" value="ECO:0007669"/>
    <property type="project" value="GOC"/>
</dbReference>
<dbReference type="GO" id="GO:0005509">
    <property type="term" value="F:calcium ion binding"/>
    <property type="evidence" value="ECO:0000318"/>
    <property type="project" value="GO_Central"/>
</dbReference>
<dbReference type="GO" id="GO:0098976">
    <property type="term" value="P:excitatory chemical synaptic transmission"/>
    <property type="evidence" value="ECO:0007669"/>
    <property type="project" value="Ensembl"/>
</dbReference>
<dbReference type="GO" id="GO:0010467">
    <property type="term" value="P:gene expression"/>
    <property type="evidence" value="ECO:0007669"/>
    <property type="project" value="Ensembl"/>
</dbReference>
<dbReference type="GO" id="GO:0098977">
    <property type="term" value="P:inhibitory chemical synaptic transmission"/>
    <property type="evidence" value="ECO:0007669"/>
    <property type="project" value="Ensembl"/>
</dbReference>
<dbReference type="CDD" id="cd16254">
    <property type="entry name" value="EFh_parvalbumin_alpha"/>
    <property type="match status" value="1"/>
</dbReference>
<dbReference type="FunFam" id="1.10.238.10:FF:000060">
    <property type="entry name" value="Parvalbumin, thymic"/>
    <property type="match status" value="1"/>
</dbReference>
<dbReference type="Gene3D" id="1.10.238.10">
    <property type="entry name" value="EF-hand"/>
    <property type="match status" value="1"/>
</dbReference>
<dbReference type="InterPro" id="IPR011992">
    <property type="entry name" value="EF-hand-dom_pair"/>
</dbReference>
<dbReference type="InterPro" id="IPR018247">
    <property type="entry name" value="EF_Hand_1_Ca_BS"/>
</dbReference>
<dbReference type="InterPro" id="IPR002048">
    <property type="entry name" value="EF_hand_dom"/>
</dbReference>
<dbReference type="InterPro" id="IPR008080">
    <property type="entry name" value="Parvalbumin"/>
</dbReference>
<dbReference type="PANTHER" id="PTHR11653">
    <property type="entry name" value="PARVALBUMIN ALPHA"/>
    <property type="match status" value="1"/>
</dbReference>
<dbReference type="PANTHER" id="PTHR11653:SF2">
    <property type="entry name" value="PARVALBUMIN ALPHA"/>
    <property type="match status" value="1"/>
</dbReference>
<dbReference type="Pfam" id="PF13499">
    <property type="entry name" value="EF-hand_7"/>
    <property type="match status" value="1"/>
</dbReference>
<dbReference type="PRINTS" id="PR01697">
    <property type="entry name" value="PARVALBUMIN"/>
</dbReference>
<dbReference type="SMART" id="SM00054">
    <property type="entry name" value="EFh"/>
    <property type="match status" value="2"/>
</dbReference>
<dbReference type="SUPFAM" id="SSF47473">
    <property type="entry name" value="EF-hand"/>
    <property type="match status" value="1"/>
</dbReference>
<dbReference type="PROSITE" id="PS00018">
    <property type="entry name" value="EF_HAND_1"/>
    <property type="match status" value="2"/>
</dbReference>
<dbReference type="PROSITE" id="PS50222">
    <property type="entry name" value="EF_HAND_2"/>
    <property type="match status" value="2"/>
</dbReference>
<sequence>MSMTDLLNAEDIKKAVGAFSATDSFDHKKFFQMVGLKKKSADDVKKVFHMLDKDKSGFIEEDELGFILKGFSPDARDLSAKETKMLMAAGDKDGDGKIGVDEFSTLVAES</sequence>
<proteinExistence type="evidence at protein level"/>
<evidence type="ECO:0000250" key="1">
    <source>
        <dbReference type="UniProtKB" id="P02624"/>
    </source>
</evidence>
<evidence type="ECO:0000250" key="2">
    <source>
        <dbReference type="UniProtKB" id="P02625"/>
    </source>
</evidence>
<evidence type="ECO:0000255" key="3">
    <source>
        <dbReference type="PROSITE-ProRule" id="PRU00448"/>
    </source>
</evidence>
<evidence type="ECO:0000269" key="4">
    <source>
    </source>
</evidence>
<evidence type="ECO:0000269" key="5">
    <source>
    </source>
</evidence>
<evidence type="ECO:0000269" key="6">
    <source>
    </source>
</evidence>
<evidence type="ECO:0000269" key="7">
    <source>
    </source>
</evidence>
<evidence type="ECO:0000303" key="8">
    <source>
    </source>
</evidence>
<evidence type="ECO:0000303" key="9">
    <source>
    </source>
</evidence>
<evidence type="ECO:0000305" key="10"/>
<evidence type="ECO:0007744" key="11">
    <source>
        <dbReference type="PDB" id="1RJV"/>
    </source>
</evidence>
<evidence type="ECO:0007744" key="12">
    <source>
        <dbReference type="PDB" id="1RK9"/>
    </source>
</evidence>
<evidence type="ECO:0007744" key="13">
    <source>
        <dbReference type="PDB" id="9BB8"/>
    </source>
</evidence>
<evidence type="ECO:0007829" key="14">
    <source>
        <dbReference type="PDB" id="1RJV"/>
    </source>
</evidence>
<evidence type="ECO:0007829" key="15">
    <source>
        <dbReference type="PDB" id="9BB8"/>
    </source>
</evidence>
<feature type="initiator methionine" description="Removed" evidence="4 7">
    <location>
        <position position="1"/>
    </location>
</feature>
<feature type="chain" id="PRO_0000073588" description="Parvalbumin alpha">
    <location>
        <begin position="2"/>
        <end position="110"/>
    </location>
</feature>
<feature type="domain" description="EF-hand 1" evidence="3">
    <location>
        <begin position="39"/>
        <end position="74"/>
    </location>
</feature>
<feature type="domain" description="EF-hand 2" evidence="3">
    <location>
        <begin position="78"/>
        <end position="110"/>
    </location>
</feature>
<feature type="binding site" evidence="3 5 6 11 12 13">
    <location>
        <position position="52"/>
    </location>
    <ligand>
        <name>Ca(2+)</name>
        <dbReference type="ChEBI" id="CHEBI:29108"/>
        <label>1</label>
    </ligand>
</feature>
<feature type="binding site" evidence="3 5 6 11 12 13">
    <location>
        <position position="54"/>
    </location>
    <ligand>
        <name>Ca(2+)</name>
        <dbReference type="ChEBI" id="CHEBI:29108"/>
        <label>1</label>
    </ligand>
</feature>
<feature type="binding site" evidence="3 5 6 11 12 13">
    <location>
        <position position="56"/>
    </location>
    <ligand>
        <name>Ca(2+)</name>
        <dbReference type="ChEBI" id="CHEBI:29108"/>
        <label>1</label>
    </ligand>
</feature>
<feature type="binding site" evidence="5 6 11 12 13">
    <location>
        <position position="58"/>
    </location>
    <ligand>
        <name>Ca(2+)</name>
        <dbReference type="ChEBI" id="CHEBI:29108"/>
        <label>1</label>
    </ligand>
</feature>
<feature type="binding site" evidence="5 6 11 12 13">
    <location>
        <position position="60"/>
    </location>
    <ligand>
        <name>Ca(2+)</name>
        <dbReference type="ChEBI" id="CHEBI:29108"/>
        <label>1</label>
    </ligand>
</feature>
<feature type="binding site" evidence="3 5 6 11 12 13">
    <location>
        <position position="63"/>
    </location>
    <ligand>
        <name>Ca(2+)</name>
        <dbReference type="ChEBI" id="CHEBI:29108"/>
        <label>1</label>
    </ligand>
</feature>
<feature type="binding site" evidence="3 5 6 11 12 13">
    <location>
        <position position="91"/>
    </location>
    <ligand>
        <name>Ca(2+)</name>
        <dbReference type="ChEBI" id="CHEBI:29108"/>
        <label>2</label>
    </ligand>
</feature>
<feature type="binding site" evidence="3 5 6 11 12 13">
    <location>
        <position position="93"/>
    </location>
    <ligand>
        <name>Ca(2+)</name>
        <dbReference type="ChEBI" id="CHEBI:29108"/>
        <label>2</label>
    </ligand>
</feature>
<feature type="binding site" evidence="3 5 6 11 12 13">
    <location>
        <position position="95"/>
    </location>
    <ligand>
        <name>Ca(2+)</name>
        <dbReference type="ChEBI" id="CHEBI:29108"/>
        <label>2</label>
    </ligand>
</feature>
<feature type="binding site" evidence="3 5 6 11 12 13">
    <location>
        <position position="97"/>
    </location>
    <ligand>
        <name>Ca(2+)</name>
        <dbReference type="ChEBI" id="CHEBI:29108"/>
        <label>2</label>
    </ligand>
</feature>
<feature type="binding site" evidence="3 5 6 11 12 13">
    <location>
        <position position="102"/>
    </location>
    <ligand>
        <name>Ca(2+)</name>
        <dbReference type="ChEBI" id="CHEBI:29108"/>
        <label>2</label>
    </ligand>
</feature>
<feature type="modified residue" description="N-acetylserine" evidence="4">
    <location>
        <position position="2"/>
    </location>
</feature>
<feature type="modified residue" description="Phosphoserine" evidence="2">
    <location>
        <position position="2"/>
    </location>
</feature>
<feature type="modified residue" description="Phosphoserine" evidence="2">
    <location>
        <position position="24"/>
    </location>
</feature>
<feature type="mutagenesis site" description="Inactivation." evidence="4">
    <original>D</original>
    <variation>A</variation>
    <location>
        <position position="52"/>
    </location>
</feature>
<feature type="mutagenesis site" description="Inactivation." evidence="4">
    <original>E</original>
    <variation>V</variation>
    <location>
        <position position="63"/>
    </location>
</feature>
<feature type="mutagenesis site" description="Inactivation." evidence="4">
    <original>D</original>
    <variation>A</variation>
    <location>
        <position position="91"/>
    </location>
</feature>
<feature type="mutagenesis site" description="Inactivation." evidence="4">
    <original>E</original>
    <variation>V</variation>
    <location>
        <position position="102"/>
    </location>
</feature>
<feature type="sequence conflict" description="In Ref. 7; AAH96113." evidence="10" ref="7">
    <original>T</original>
    <variation>N</variation>
    <location>
        <position position="4"/>
    </location>
</feature>
<feature type="sequence conflict" description="In Ref. 1; CAA45134." evidence="10" ref="1">
    <location>
        <begin position="99"/>
        <end position="100"/>
    </location>
</feature>
<feature type="helix" evidence="15">
    <location>
        <begin position="3"/>
        <end position="5"/>
    </location>
</feature>
<feature type="helix" evidence="15">
    <location>
        <begin position="9"/>
        <end position="17"/>
    </location>
</feature>
<feature type="strand" evidence="14">
    <location>
        <begin position="21"/>
        <end position="23"/>
    </location>
</feature>
<feature type="helix" evidence="15">
    <location>
        <begin position="27"/>
        <end position="34"/>
    </location>
</feature>
<feature type="helix" evidence="14">
    <location>
        <begin position="36"/>
        <end position="38"/>
    </location>
</feature>
<feature type="helix" evidence="15">
    <location>
        <begin position="41"/>
        <end position="51"/>
    </location>
</feature>
<feature type="strand" evidence="15">
    <location>
        <begin position="56"/>
        <end position="59"/>
    </location>
</feature>
<feature type="helix" evidence="15">
    <location>
        <begin position="61"/>
        <end position="64"/>
    </location>
</feature>
<feature type="helix" evidence="15">
    <location>
        <begin position="67"/>
        <end position="71"/>
    </location>
</feature>
<feature type="helix" evidence="15">
    <location>
        <begin position="80"/>
        <end position="90"/>
    </location>
</feature>
<feature type="strand" evidence="15">
    <location>
        <begin position="92"/>
        <end position="99"/>
    </location>
</feature>
<feature type="helix" evidence="15">
    <location>
        <begin position="100"/>
        <end position="108"/>
    </location>
</feature>
<organism>
    <name type="scientific">Homo sapiens</name>
    <name type="common">Human</name>
    <dbReference type="NCBI Taxonomy" id="9606"/>
    <lineage>
        <taxon>Eukaryota</taxon>
        <taxon>Metazoa</taxon>
        <taxon>Chordata</taxon>
        <taxon>Craniata</taxon>
        <taxon>Vertebrata</taxon>
        <taxon>Euteleostomi</taxon>
        <taxon>Mammalia</taxon>
        <taxon>Eutheria</taxon>
        <taxon>Euarchontoglires</taxon>
        <taxon>Primates</taxon>
        <taxon>Haplorrhini</taxon>
        <taxon>Catarrhini</taxon>
        <taxon>Hominidae</taxon>
        <taxon>Homo</taxon>
    </lineage>
</organism>